<dbReference type="EC" id="2.3.1.31" evidence="1"/>
<dbReference type="EMBL" id="AP008231">
    <property type="protein sequence ID" value="BAD79332.1"/>
    <property type="molecule type" value="Genomic_DNA"/>
</dbReference>
<dbReference type="RefSeq" id="WP_011243454.1">
    <property type="nucleotide sequence ID" value="NC_006576.1"/>
</dbReference>
<dbReference type="SMR" id="Q5N2Y8"/>
<dbReference type="KEGG" id="syc:syc1142_c"/>
<dbReference type="eggNOG" id="COG1897">
    <property type="taxonomic scope" value="Bacteria"/>
</dbReference>
<dbReference type="UniPathway" id="UPA00051">
    <property type="reaction ID" value="UER00074"/>
</dbReference>
<dbReference type="Proteomes" id="UP000001175">
    <property type="component" value="Chromosome"/>
</dbReference>
<dbReference type="GO" id="GO:0005737">
    <property type="term" value="C:cytoplasm"/>
    <property type="evidence" value="ECO:0007669"/>
    <property type="project" value="UniProtKB-SubCell"/>
</dbReference>
<dbReference type="GO" id="GO:0004414">
    <property type="term" value="F:homoserine O-acetyltransferase activity"/>
    <property type="evidence" value="ECO:0007669"/>
    <property type="project" value="UniProtKB-EC"/>
</dbReference>
<dbReference type="GO" id="GO:0008899">
    <property type="term" value="F:homoserine O-succinyltransferase activity"/>
    <property type="evidence" value="ECO:0007669"/>
    <property type="project" value="UniProtKB-UniRule"/>
</dbReference>
<dbReference type="GO" id="GO:0019281">
    <property type="term" value="P:L-methionine biosynthetic process from homoserine via O-succinyl-L-homoserine and cystathionine"/>
    <property type="evidence" value="ECO:0007669"/>
    <property type="project" value="InterPro"/>
</dbReference>
<dbReference type="CDD" id="cd03131">
    <property type="entry name" value="GATase1_HTS"/>
    <property type="match status" value="1"/>
</dbReference>
<dbReference type="Gene3D" id="3.40.50.880">
    <property type="match status" value="1"/>
</dbReference>
<dbReference type="HAMAP" id="MF_00295">
    <property type="entry name" value="MetA_acyltransf"/>
    <property type="match status" value="1"/>
</dbReference>
<dbReference type="InterPro" id="IPR029062">
    <property type="entry name" value="Class_I_gatase-like"/>
</dbReference>
<dbReference type="InterPro" id="IPR005697">
    <property type="entry name" value="HST_MetA"/>
</dbReference>
<dbReference type="InterPro" id="IPR033752">
    <property type="entry name" value="MetA_family"/>
</dbReference>
<dbReference type="NCBIfam" id="TIGR01001">
    <property type="entry name" value="metA"/>
    <property type="match status" value="1"/>
</dbReference>
<dbReference type="PANTHER" id="PTHR20919">
    <property type="entry name" value="HOMOSERINE O-SUCCINYLTRANSFERASE"/>
    <property type="match status" value="1"/>
</dbReference>
<dbReference type="PANTHER" id="PTHR20919:SF0">
    <property type="entry name" value="HOMOSERINE O-SUCCINYLTRANSFERASE"/>
    <property type="match status" value="1"/>
</dbReference>
<dbReference type="Pfam" id="PF04204">
    <property type="entry name" value="HTS"/>
    <property type="match status" value="1"/>
</dbReference>
<dbReference type="PIRSF" id="PIRSF000450">
    <property type="entry name" value="H_ser_succinyltr"/>
    <property type="match status" value="1"/>
</dbReference>
<dbReference type="SUPFAM" id="SSF52317">
    <property type="entry name" value="Class I glutamine amidotransferase-like"/>
    <property type="match status" value="1"/>
</dbReference>
<reference key="1">
    <citation type="journal article" date="2007" name="Photosyn. Res.">
        <title>Complete nucleotide sequence of the freshwater unicellular cyanobacterium Synechococcus elongatus PCC 6301 chromosome: gene content and organization.</title>
        <authorList>
            <person name="Sugita C."/>
            <person name="Ogata K."/>
            <person name="Shikata M."/>
            <person name="Jikuya H."/>
            <person name="Takano J."/>
            <person name="Furumichi M."/>
            <person name="Kanehisa M."/>
            <person name="Omata T."/>
            <person name="Sugiura M."/>
            <person name="Sugita M."/>
        </authorList>
    </citation>
    <scope>NUCLEOTIDE SEQUENCE [LARGE SCALE GENOMIC DNA]</scope>
    <source>
        <strain>ATCC 27144 / PCC 6301 / SAUG 1402/1</strain>
    </source>
</reference>
<organism>
    <name type="scientific">Synechococcus sp. (strain ATCC 27144 / PCC 6301 / SAUG 1402/1)</name>
    <name type="common">Anacystis nidulans</name>
    <dbReference type="NCBI Taxonomy" id="269084"/>
    <lineage>
        <taxon>Bacteria</taxon>
        <taxon>Bacillati</taxon>
        <taxon>Cyanobacteriota</taxon>
        <taxon>Cyanophyceae</taxon>
        <taxon>Synechococcales</taxon>
        <taxon>Synechococcaceae</taxon>
        <taxon>Synechococcus</taxon>
    </lineage>
</organism>
<name>METAA_SYNP6</name>
<comment type="function">
    <text evidence="1">Transfers an acetyl group from acetyl-CoA to L-homoserine, forming acetyl-L-homoserine.</text>
</comment>
<comment type="catalytic activity">
    <reaction evidence="1">
        <text>L-homoserine + acetyl-CoA = O-acetyl-L-homoserine + CoA</text>
        <dbReference type="Rhea" id="RHEA:13701"/>
        <dbReference type="ChEBI" id="CHEBI:57287"/>
        <dbReference type="ChEBI" id="CHEBI:57288"/>
        <dbReference type="ChEBI" id="CHEBI:57476"/>
        <dbReference type="ChEBI" id="CHEBI:57716"/>
        <dbReference type="EC" id="2.3.1.31"/>
    </reaction>
</comment>
<comment type="pathway">
    <text evidence="1">Amino-acid biosynthesis; L-methionine biosynthesis via de novo pathway; O-acetyl-L-homoserine from L-homoserine: step 1/1.</text>
</comment>
<comment type="subcellular location">
    <subcellularLocation>
        <location evidence="1">Cytoplasm</location>
    </subcellularLocation>
</comment>
<comment type="similarity">
    <text evidence="1">Belongs to the MetA family.</text>
</comment>
<gene>
    <name evidence="1" type="primary">metAA</name>
    <name type="ordered locus">syc1142_c</name>
</gene>
<protein>
    <recommendedName>
        <fullName evidence="1">Homoserine O-acetyltransferase</fullName>
        <shortName evidence="1">HAT</shortName>
        <ecNumber evidence="1">2.3.1.31</ecNumber>
    </recommendedName>
    <alternativeName>
        <fullName evidence="1">Homoserine transacetylase</fullName>
        <shortName evidence="1">HTA</shortName>
    </alternativeName>
</protein>
<proteinExistence type="inferred from homology"/>
<evidence type="ECO:0000255" key="1">
    <source>
        <dbReference type="HAMAP-Rule" id="MF_00295"/>
    </source>
</evidence>
<keyword id="KW-0012">Acyltransferase</keyword>
<keyword id="KW-0028">Amino-acid biosynthesis</keyword>
<keyword id="KW-0963">Cytoplasm</keyword>
<keyword id="KW-0486">Methionine biosynthesis</keyword>
<keyword id="KW-0808">Transferase</keyword>
<sequence>MPIIIPQDLPARRILDAESVFTLGDADARRQDIRALQVVVLNLMPTKVTTETQIARVLANTPLQVELTLIHTASYQPTHTDPEHLRNFYSTFDQIRDRQFDGLIVTGAPVETLPWLAVDYWSELTTILDWSREAVRSSLFICWGAQAALQHFHGIEKQTLPAKRFGVFWHHLRDRSSPLVRGHDDDFLVPVSRHTEVIAAEVLAQSQLQILAESSEAGLHLLWDADQHRTYLFNHPEYDADTLDREYRRDREKGLPIQLPLNYYPNDDPNQVPTVRWRSHAQLLYTNWLNYEVYQPLSR</sequence>
<feature type="chain" id="PRO_1000021856" description="Homoserine O-acetyltransferase">
    <location>
        <begin position="1"/>
        <end position="299"/>
    </location>
</feature>
<feature type="active site" description="Acyl-thioester intermediate" evidence="1">
    <location>
        <position position="142"/>
    </location>
</feature>
<feature type="active site" description="Proton acceptor" evidence="1">
    <location>
        <position position="235"/>
    </location>
</feature>
<feature type="active site" evidence="1">
    <location>
        <position position="237"/>
    </location>
</feature>
<feature type="binding site" evidence="1">
    <location>
        <position position="163"/>
    </location>
    <ligand>
        <name>substrate</name>
    </ligand>
</feature>
<feature type="binding site" evidence="1">
    <location>
        <position position="192"/>
    </location>
    <ligand>
        <name>substrate</name>
    </ligand>
</feature>
<feature type="binding site" evidence="1">
    <location>
        <position position="249"/>
    </location>
    <ligand>
        <name>substrate</name>
    </ligand>
</feature>
<feature type="site" description="Important for acyl-CoA specificity" evidence="1">
    <location>
        <position position="111"/>
    </location>
</feature>
<feature type="site" description="Important for substrate specificity" evidence="1">
    <location>
        <position position="192"/>
    </location>
</feature>
<accession>Q5N2Y8</accession>